<organism>
    <name type="scientific">Rickettsia felis (strain ATCC VR-1525 / URRWXCal2)</name>
    <name type="common">Rickettsia azadi</name>
    <dbReference type="NCBI Taxonomy" id="315456"/>
    <lineage>
        <taxon>Bacteria</taxon>
        <taxon>Pseudomonadati</taxon>
        <taxon>Pseudomonadota</taxon>
        <taxon>Alphaproteobacteria</taxon>
        <taxon>Rickettsiales</taxon>
        <taxon>Rickettsiaceae</taxon>
        <taxon>Rickettsieae</taxon>
        <taxon>Rickettsia</taxon>
        <taxon>spotted fever group</taxon>
    </lineage>
</organism>
<accession>Q4UKA6</accession>
<sequence>MLKEEDKIFTNLHGQQSHDLKSSKKRGDWDNTKALLDKGREFIIEEVKKSGLRGRGGAGFSTGMKWSFMPKNSAKPCYLVVNADESEPGTCKDRDILRFEPHKLIEGCLLASFAIGANDCYIYIRGEFYNEASNIQRALDEAYKDGLIGKNACGSGFDCNIYLHRGAGAYICGEETALLESLEGKKGMPRLKPPFPAGFGLYGCPTTINNVESIAVVPTILRRGASWFASIGKPNNTGTKIFCISGHVNKPCNVEEAMGISLKELIEKYAGGVRGGWDNLKAIIPGGSSVPLLPKSLCEVDMDFDSLRTAGSGLGTGGIIVMDKSTDIIYAIARLSKFYMHESCGQCTPCREGTGWMWRVMMRLVKGNAQKSEIDELLNVTKEIEGHTICALGDAAAWPIQGLIRHFRSEIEERIKGWSSAI</sequence>
<evidence type="ECO:0000250" key="1"/>
<evidence type="ECO:0000255" key="2"/>
<evidence type="ECO:0000256" key="3">
    <source>
        <dbReference type="SAM" id="MobiDB-lite"/>
    </source>
</evidence>
<evidence type="ECO:0000305" key="4"/>
<gene>
    <name type="primary">nuoF</name>
    <name type="ordered locus">RF_1178</name>
</gene>
<protein>
    <recommendedName>
        <fullName>NADH-quinone oxidoreductase subunit F</fullName>
        <ecNumber>7.1.1.-</ecNumber>
    </recommendedName>
    <alternativeName>
        <fullName>NADH dehydrogenase I subunit F</fullName>
    </alternativeName>
    <alternativeName>
        <fullName>NDH-1 subunit F</fullName>
    </alternativeName>
</protein>
<comment type="function">
    <text evidence="1">NDH-1 shuttles electrons from NADH, via FMN and iron-sulfur (Fe-S) centers, to quinones in the respiratory chain. Couples the redox reaction to proton translocation (for every two electrons transferred, four hydrogen ions are translocated across the cytoplasmic membrane), and thus conserves the redox energy in a proton gradient (By similarity).</text>
</comment>
<comment type="catalytic activity">
    <reaction>
        <text>a quinone + NADH + 5 H(+)(in) = a quinol + NAD(+) + 4 H(+)(out)</text>
        <dbReference type="Rhea" id="RHEA:57888"/>
        <dbReference type="ChEBI" id="CHEBI:15378"/>
        <dbReference type="ChEBI" id="CHEBI:24646"/>
        <dbReference type="ChEBI" id="CHEBI:57540"/>
        <dbReference type="ChEBI" id="CHEBI:57945"/>
        <dbReference type="ChEBI" id="CHEBI:132124"/>
    </reaction>
</comment>
<comment type="cofactor">
    <cofactor evidence="4">
        <name>FMN</name>
        <dbReference type="ChEBI" id="CHEBI:58210"/>
    </cofactor>
    <text evidence="4">Binds 1 FMN.</text>
</comment>
<comment type="cofactor">
    <cofactor evidence="4">
        <name>[4Fe-4S] cluster</name>
        <dbReference type="ChEBI" id="CHEBI:49883"/>
    </cofactor>
    <text evidence="4">Binds 1 [4Fe-4S] cluster.</text>
</comment>
<comment type="similarity">
    <text evidence="4">Belongs to the complex I 51 kDa subunit family.</text>
</comment>
<reference key="1">
    <citation type="journal article" date="2005" name="PLoS Biol.">
        <title>The genome sequence of Rickettsia felis identifies the first putative conjugative plasmid in an obligate intracellular parasite.</title>
        <authorList>
            <person name="Ogata H."/>
            <person name="Renesto P."/>
            <person name="Audic S."/>
            <person name="Robert C."/>
            <person name="Blanc G."/>
            <person name="Fournier P.-E."/>
            <person name="Parinello H."/>
            <person name="Claverie J.-M."/>
            <person name="Raoult D."/>
        </authorList>
    </citation>
    <scope>NUCLEOTIDE SEQUENCE [LARGE SCALE GENOMIC DNA]</scope>
    <source>
        <strain>ATCC VR-1525 / URRWXCal2</strain>
    </source>
</reference>
<proteinExistence type="inferred from homology"/>
<dbReference type="EC" id="7.1.1.-"/>
<dbReference type="EMBL" id="CP000053">
    <property type="protein sequence ID" value="AAY62029.1"/>
    <property type="molecule type" value="Genomic_DNA"/>
</dbReference>
<dbReference type="SMR" id="Q4UKA6"/>
<dbReference type="STRING" id="315456.RF_1178"/>
<dbReference type="KEGG" id="rfe:RF_1178"/>
<dbReference type="eggNOG" id="COG1894">
    <property type="taxonomic scope" value="Bacteria"/>
</dbReference>
<dbReference type="HOGENOM" id="CLU_014881_0_1_5"/>
<dbReference type="OrthoDB" id="9761899at2"/>
<dbReference type="Proteomes" id="UP000008548">
    <property type="component" value="Chromosome"/>
</dbReference>
<dbReference type="GO" id="GO:0051539">
    <property type="term" value="F:4 iron, 4 sulfur cluster binding"/>
    <property type="evidence" value="ECO:0007669"/>
    <property type="project" value="UniProtKB-KW"/>
</dbReference>
<dbReference type="GO" id="GO:0010181">
    <property type="term" value="F:FMN binding"/>
    <property type="evidence" value="ECO:0007669"/>
    <property type="project" value="InterPro"/>
</dbReference>
<dbReference type="GO" id="GO:0046872">
    <property type="term" value="F:metal ion binding"/>
    <property type="evidence" value="ECO:0007669"/>
    <property type="project" value="UniProtKB-KW"/>
</dbReference>
<dbReference type="GO" id="GO:0051287">
    <property type="term" value="F:NAD binding"/>
    <property type="evidence" value="ECO:0007669"/>
    <property type="project" value="InterPro"/>
</dbReference>
<dbReference type="GO" id="GO:0008137">
    <property type="term" value="F:NADH dehydrogenase (ubiquinone) activity"/>
    <property type="evidence" value="ECO:0007669"/>
    <property type="project" value="InterPro"/>
</dbReference>
<dbReference type="GO" id="GO:0048038">
    <property type="term" value="F:quinone binding"/>
    <property type="evidence" value="ECO:0007669"/>
    <property type="project" value="UniProtKB-KW"/>
</dbReference>
<dbReference type="FunFam" id="1.20.1440.230:FF:000001">
    <property type="entry name" value="Mitochondrial NADH dehydrogenase flavoprotein 1"/>
    <property type="match status" value="1"/>
</dbReference>
<dbReference type="FunFam" id="3.10.20.600:FF:000001">
    <property type="entry name" value="NADH dehydrogenase [ubiquinone] flavoprotein 1, mitochondrial"/>
    <property type="match status" value="1"/>
</dbReference>
<dbReference type="FunFam" id="3.40.50.11540:FF:000001">
    <property type="entry name" value="NADH dehydrogenase [ubiquinone] flavoprotein 1, mitochondrial"/>
    <property type="match status" value="1"/>
</dbReference>
<dbReference type="Gene3D" id="3.10.20.600">
    <property type="match status" value="1"/>
</dbReference>
<dbReference type="Gene3D" id="3.40.50.11540">
    <property type="entry name" value="NADH-ubiquinone oxidoreductase 51kDa subunit"/>
    <property type="match status" value="1"/>
</dbReference>
<dbReference type="Gene3D" id="1.20.1440.230">
    <property type="entry name" value="NADH-ubiquinone oxidoreductase 51kDa subunit, iron-sulphur binding domain"/>
    <property type="match status" value="1"/>
</dbReference>
<dbReference type="InterPro" id="IPR050837">
    <property type="entry name" value="ComplexI_51kDa_subunit"/>
</dbReference>
<dbReference type="InterPro" id="IPR001949">
    <property type="entry name" value="NADH-UbQ_OxRdtase_51kDa_CS"/>
</dbReference>
<dbReference type="InterPro" id="IPR011537">
    <property type="entry name" value="NADH-UbQ_OxRdtase_suF"/>
</dbReference>
<dbReference type="InterPro" id="IPR011538">
    <property type="entry name" value="Nuo51_FMN-bd"/>
</dbReference>
<dbReference type="InterPro" id="IPR037225">
    <property type="entry name" value="Nuo51_FMN-bd_sf"/>
</dbReference>
<dbReference type="InterPro" id="IPR019575">
    <property type="entry name" value="Nuop51_4Fe4S-bd"/>
</dbReference>
<dbReference type="InterPro" id="IPR037207">
    <property type="entry name" value="Nuop51_4Fe4S-bd_sf"/>
</dbReference>
<dbReference type="InterPro" id="IPR054765">
    <property type="entry name" value="SLBB_dom"/>
</dbReference>
<dbReference type="NCBIfam" id="TIGR01959">
    <property type="entry name" value="nuoF_fam"/>
    <property type="match status" value="1"/>
</dbReference>
<dbReference type="NCBIfam" id="NF010120">
    <property type="entry name" value="PRK13596.1"/>
    <property type="match status" value="1"/>
</dbReference>
<dbReference type="PANTHER" id="PTHR11780:SF10">
    <property type="entry name" value="NADH DEHYDROGENASE [UBIQUINONE] FLAVOPROTEIN 1, MITOCHONDRIAL"/>
    <property type="match status" value="1"/>
</dbReference>
<dbReference type="PANTHER" id="PTHR11780">
    <property type="entry name" value="NADH-UBIQUINONE OXIDOREDUCTASE FLAVOPROTEIN 1 NDUFV1"/>
    <property type="match status" value="1"/>
</dbReference>
<dbReference type="Pfam" id="PF01512">
    <property type="entry name" value="Complex1_51K"/>
    <property type="match status" value="1"/>
</dbReference>
<dbReference type="Pfam" id="PF10589">
    <property type="entry name" value="NADH_4Fe-4S"/>
    <property type="match status" value="1"/>
</dbReference>
<dbReference type="Pfam" id="PF22461">
    <property type="entry name" value="SLBB_2"/>
    <property type="match status" value="1"/>
</dbReference>
<dbReference type="SMART" id="SM00928">
    <property type="entry name" value="NADH_4Fe-4S"/>
    <property type="match status" value="1"/>
</dbReference>
<dbReference type="SUPFAM" id="SSF142019">
    <property type="entry name" value="Nqo1 FMN-binding domain-like"/>
    <property type="match status" value="1"/>
</dbReference>
<dbReference type="SUPFAM" id="SSF142984">
    <property type="entry name" value="Nqo1 middle domain-like"/>
    <property type="match status" value="1"/>
</dbReference>
<dbReference type="SUPFAM" id="SSF140490">
    <property type="entry name" value="Nqo1C-terminal domain-like"/>
    <property type="match status" value="1"/>
</dbReference>
<dbReference type="PROSITE" id="PS00644">
    <property type="entry name" value="COMPLEX1_51K_1"/>
    <property type="match status" value="1"/>
</dbReference>
<dbReference type="PROSITE" id="PS00645">
    <property type="entry name" value="COMPLEX1_51K_2"/>
    <property type="match status" value="1"/>
</dbReference>
<keyword id="KW-0004">4Fe-4S</keyword>
<keyword id="KW-0285">Flavoprotein</keyword>
<keyword id="KW-0288">FMN</keyword>
<keyword id="KW-0408">Iron</keyword>
<keyword id="KW-0411">Iron-sulfur</keyword>
<keyword id="KW-0479">Metal-binding</keyword>
<keyword id="KW-0520">NAD</keyword>
<keyword id="KW-0874">Quinone</keyword>
<keyword id="KW-1278">Translocase</keyword>
<name>NUOF_RICFE</name>
<feature type="chain" id="PRO_0000274788" description="NADH-quinone oxidoreductase subunit F">
    <location>
        <begin position="1"/>
        <end position="422"/>
    </location>
</feature>
<feature type="region of interest" description="Disordered" evidence="3">
    <location>
        <begin position="1"/>
        <end position="26"/>
    </location>
</feature>
<feature type="compositionally biased region" description="Basic and acidic residues" evidence="3">
    <location>
        <begin position="16"/>
        <end position="26"/>
    </location>
</feature>
<feature type="binding site" evidence="1">
    <location>
        <begin position="54"/>
        <end position="63"/>
    </location>
    <ligand>
        <name>NAD(+)</name>
        <dbReference type="ChEBI" id="CHEBI:57540"/>
    </ligand>
</feature>
<feature type="binding site" evidence="1">
    <location>
        <begin position="166"/>
        <end position="213"/>
    </location>
    <ligand>
        <name>FMN</name>
        <dbReference type="ChEBI" id="CHEBI:58210"/>
    </ligand>
</feature>
<feature type="binding site" evidence="2">
    <location>
        <position position="344"/>
    </location>
    <ligand>
        <name>[4Fe-4S] cluster</name>
        <dbReference type="ChEBI" id="CHEBI:49883"/>
    </ligand>
</feature>
<feature type="binding site" evidence="2">
    <location>
        <position position="347"/>
    </location>
    <ligand>
        <name>[4Fe-4S] cluster</name>
        <dbReference type="ChEBI" id="CHEBI:49883"/>
    </ligand>
</feature>
<feature type="binding site" evidence="2">
    <location>
        <position position="350"/>
    </location>
    <ligand>
        <name>[4Fe-4S] cluster</name>
        <dbReference type="ChEBI" id="CHEBI:49883"/>
    </ligand>
</feature>
<feature type="binding site" evidence="2">
    <location>
        <position position="390"/>
    </location>
    <ligand>
        <name>[4Fe-4S] cluster</name>
        <dbReference type="ChEBI" id="CHEBI:49883"/>
    </ligand>
</feature>